<accession>Q0AKF5</accession>
<reference key="1">
    <citation type="submission" date="2006-08" db="EMBL/GenBank/DDBJ databases">
        <title>Complete sequence of Maricaulis maris MCS10.</title>
        <authorList>
            <consortium name="US DOE Joint Genome Institute"/>
            <person name="Copeland A."/>
            <person name="Lucas S."/>
            <person name="Lapidus A."/>
            <person name="Barry K."/>
            <person name="Detter J.C."/>
            <person name="Glavina del Rio T."/>
            <person name="Hammon N."/>
            <person name="Israni S."/>
            <person name="Dalin E."/>
            <person name="Tice H."/>
            <person name="Pitluck S."/>
            <person name="Saunders E."/>
            <person name="Brettin T."/>
            <person name="Bruce D."/>
            <person name="Han C."/>
            <person name="Tapia R."/>
            <person name="Gilna P."/>
            <person name="Schmutz J."/>
            <person name="Larimer F."/>
            <person name="Land M."/>
            <person name="Hauser L."/>
            <person name="Kyrpides N."/>
            <person name="Mikhailova N."/>
            <person name="Viollier P."/>
            <person name="Stephens C."/>
            <person name="Richardson P."/>
        </authorList>
    </citation>
    <scope>NUCLEOTIDE SEQUENCE [LARGE SCALE GENOMIC DNA]</scope>
    <source>
        <strain>MCS10</strain>
    </source>
</reference>
<gene>
    <name evidence="1" type="primary">leuS</name>
    <name type="ordered locus">Mmar10_2957</name>
</gene>
<comment type="catalytic activity">
    <reaction evidence="1">
        <text>tRNA(Leu) + L-leucine + ATP = L-leucyl-tRNA(Leu) + AMP + diphosphate</text>
        <dbReference type="Rhea" id="RHEA:11688"/>
        <dbReference type="Rhea" id="RHEA-COMP:9613"/>
        <dbReference type="Rhea" id="RHEA-COMP:9622"/>
        <dbReference type="ChEBI" id="CHEBI:30616"/>
        <dbReference type="ChEBI" id="CHEBI:33019"/>
        <dbReference type="ChEBI" id="CHEBI:57427"/>
        <dbReference type="ChEBI" id="CHEBI:78442"/>
        <dbReference type="ChEBI" id="CHEBI:78494"/>
        <dbReference type="ChEBI" id="CHEBI:456215"/>
        <dbReference type="EC" id="6.1.1.4"/>
    </reaction>
</comment>
<comment type="subcellular location">
    <subcellularLocation>
        <location evidence="1">Cytoplasm</location>
    </subcellularLocation>
</comment>
<comment type="similarity">
    <text evidence="1">Belongs to the class-I aminoacyl-tRNA synthetase family.</text>
</comment>
<organism>
    <name type="scientific">Maricaulis maris (strain MCS10)</name>
    <name type="common">Caulobacter maris</name>
    <dbReference type="NCBI Taxonomy" id="394221"/>
    <lineage>
        <taxon>Bacteria</taxon>
        <taxon>Pseudomonadati</taxon>
        <taxon>Pseudomonadota</taxon>
        <taxon>Alphaproteobacteria</taxon>
        <taxon>Maricaulales</taxon>
        <taxon>Maricaulaceae</taxon>
        <taxon>Maricaulis</taxon>
    </lineage>
</organism>
<feature type="chain" id="PRO_1000009368" description="Leucine--tRNA ligase">
    <location>
        <begin position="1"/>
        <end position="865"/>
    </location>
</feature>
<feature type="short sequence motif" description="'HIGH' region">
    <location>
        <begin position="44"/>
        <end position="54"/>
    </location>
</feature>
<feature type="short sequence motif" description="'KMSKS' region">
    <location>
        <begin position="625"/>
        <end position="629"/>
    </location>
</feature>
<feature type="binding site" evidence="1">
    <location>
        <position position="628"/>
    </location>
    <ligand>
        <name>ATP</name>
        <dbReference type="ChEBI" id="CHEBI:30616"/>
    </ligand>
</feature>
<protein>
    <recommendedName>
        <fullName evidence="1">Leucine--tRNA ligase</fullName>
        <ecNumber evidence="1">6.1.1.4</ecNumber>
    </recommendedName>
    <alternativeName>
        <fullName evidence="1">Leucyl-tRNA synthetase</fullName>
        <shortName evidence="1">LeuRS</shortName>
    </alternativeName>
</protein>
<sequence length="865" mass="95991">MTRYNPREAEPKWQSAWDACDAFKAIGPSASNNKPKYYVLEMFPYPSGRIHVGHSRNYTMGDVVARYKRARGFDVLHPMGWDAFGLPAENAARDRGVHPGAWTHDNIDAMRGQLQRLGLALDWSREIATCDPSYYRHQQAIFLRLMERGLLHRKTAKVNWDPVDQTVLANEQVIDGRGWRSGALVVQRELDQWFFKITEYADELTDALEELDRWPDKVRTMQSNWIGRSRGAEVSFPLTDSGLAEQFGATIDVFTTRPDTLFGASFLALAPDHPIVKALAADDPEIDRFMHECARMGTTAEEIEKAPKRGVDLGITVRHPFDENWELPVWSANFVLSGYGTGAIFGSPAGDQRDLDFARKYDLAVQPVVLPPEASADTHVIEDEAYTGPGTSYNSRFLDGLSTADALERAITELEARKLGKGATSYRLRDWLVSRQRYWGCPIPVIHCADCGVVPVPEDQLPVVLPEDVTFDHPSNPLERHPTWKNADCPKCGKAGRRETDTLDTFVCSSWYFLRFTSPWSEDTPFLASDAEHWMPVDQYVGGIEHAILHLLYARFFTRALNDAGLMNMKSGEPFAGLFTQGMVTHETYKSADGKWLSPEEVDLRKDGAVEMSTGKPVSVGAIEKMSKSKKNVVDLDAFIESYGADAVRWFVLSDSPPERDVEYTDSGVEGVWRFVQRLWSTVTSLPEGAPGPLTVAADASGPALEIRRAAHKALHAVTDAIEGFRFNSAVAQVHDLVNVLRKYVPSDDAGIAAKTEALGILARIIAPFVPHLAEECWEHLGGEGLVIDAAWPEADPALLVEDSVTLPVQVNGKRRTEVTAPKGAAQDVVQEMVMADQTVQRALEGLTVRKVIVVPDRIVNIVAG</sequence>
<proteinExistence type="inferred from homology"/>
<keyword id="KW-0030">Aminoacyl-tRNA synthetase</keyword>
<keyword id="KW-0067">ATP-binding</keyword>
<keyword id="KW-0963">Cytoplasm</keyword>
<keyword id="KW-0436">Ligase</keyword>
<keyword id="KW-0547">Nucleotide-binding</keyword>
<keyword id="KW-0648">Protein biosynthesis</keyword>
<keyword id="KW-1185">Reference proteome</keyword>
<name>SYL_MARMM</name>
<dbReference type="EC" id="6.1.1.4" evidence="1"/>
<dbReference type="EMBL" id="CP000449">
    <property type="protein sequence ID" value="ABI67238.1"/>
    <property type="molecule type" value="Genomic_DNA"/>
</dbReference>
<dbReference type="RefSeq" id="WP_011644882.1">
    <property type="nucleotide sequence ID" value="NC_008347.1"/>
</dbReference>
<dbReference type="SMR" id="Q0AKF5"/>
<dbReference type="STRING" id="394221.Mmar10_2957"/>
<dbReference type="KEGG" id="mmr:Mmar10_2957"/>
<dbReference type="eggNOG" id="COG0495">
    <property type="taxonomic scope" value="Bacteria"/>
</dbReference>
<dbReference type="HOGENOM" id="CLU_004427_0_0_5"/>
<dbReference type="OrthoDB" id="9810365at2"/>
<dbReference type="Proteomes" id="UP000001964">
    <property type="component" value="Chromosome"/>
</dbReference>
<dbReference type="GO" id="GO:0005829">
    <property type="term" value="C:cytosol"/>
    <property type="evidence" value="ECO:0007669"/>
    <property type="project" value="TreeGrafter"/>
</dbReference>
<dbReference type="GO" id="GO:0002161">
    <property type="term" value="F:aminoacyl-tRNA deacylase activity"/>
    <property type="evidence" value="ECO:0007669"/>
    <property type="project" value="InterPro"/>
</dbReference>
<dbReference type="GO" id="GO:0005524">
    <property type="term" value="F:ATP binding"/>
    <property type="evidence" value="ECO:0007669"/>
    <property type="project" value="UniProtKB-UniRule"/>
</dbReference>
<dbReference type="GO" id="GO:0004823">
    <property type="term" value="F:leucine-tRNA ligase activity"/>
    <property type="evidence" value="ECO:0007669"/>
    <property type="project" value="UniProtKB-UniRule"/>
</dbReference>
<dbReference type="GO" id="GO:0006429">
    <property type="term" value="P:leucyl-tRNA aminoacylation"/>
    <property type="evidence" value="ECO:0007669"/>
    <property type="project" value="UniProtKB-UniRule"/>
</dbReference>
<dbReference type="CDD" id="cd07958">
    <property type="entry name" value="Anticodon_Ia_Leu_BEm"/>
    <property type="match status" value="1"/>
</dbReference>
<dbReference type="CDD" id="cd00812">
    <property type="entry name" value="LeuRS_core"/>
    <property type="match status" value="1"/>
</dbReference>
<dbReference type="FunFam" id="1.10.730.10:FF:000002">
    <property type="entry name" value="Leucine--tRNA ligase"/>
    <property type="match status" value="1"/>
</dbReference>
<dbReference type="FunFam" id="3.40.50.620:FF:000003">
    <property type="entry name" value="Leucine--tRNA ligase"/>
    <property type="match status" value="1"/>
</dbReference>
<dbReference type="FunFam" id="3.40.50.620:FF:000056">
    <property type="entry name" value="Leucine--tRNA ligase"/>
    <property type="match status" value="1"/>
</dbReference>
<dbReference type="Gene3D" id="2.20.28.290">
    <property type="match status" value="1"/>
</dbReference>
<dbReference type="Gene3D" id="3.10.20.590">
    <property type="match status" value="1"/>
</dbReference>
<dbReference type="Gene3D" id="3.40.50.620">
    <property type="entry name" value="HUPs"/>
    <property type="match status" value="2"/>
</dbReference>
<dbReference type="Gene3D" id="1.10.730.10">
    <property type="entry name" value="Isoleucyl-tRNA Synthetase, Domain 1"/>
    <property type="match status" value="2"/>
</dbReference>
<dbReference type="Gene3D" id="3.90.740.10">
    <property type="entry name" value="Valyl/Leucyl/Isoleucyl-tRNA synthetase, editing domain"/>
    <property type="match status" value="1"/>
</dbReference>
<dbReference type="HAMAP" id="MF_00049_B">
    <property type="entry name" value="Leu_tRNA_synth_B"/>
    <property type="match status" value="1"/>
</dbReference>
<dbReference type="InterPro" id="IPR001412">
    <property type="entry name" value="aa-tRNA-synth_I_CS"/>
</dbReference>
<dbReference type="InterPro" id="IPR002300">
    <property type="entry name" value="aa-tRNA-synth_Ia"/>
</dbReference>
<dbReference type="InterPro" id="IPR002302">
    <property type="entry name" value="Leu-tRNA-ligase"/>
</dbReference>
<dbReference type="InterPro" id="IPR025709">
    <property type="entry name" value="Leu_tRNA-synth_edit"/>
</dbReference>
<dbReference type="InterPro" id="IPR013155">
    <property type="entry name" value="M/V/L/I-tRNA-synth_anticd-bd"/>
</dbReference>
<dbReference type="InterPro" id="IPR015413">
    <property type="entry name" value="Methionyl/Leucyl_tRNA_Synth"/>
</dbReference>
<dbReference type="InterPro" id="IPR014729">
    <property type="entry name" value="Rossmann-like_a/b/a_fold"/>
</dbReference>
<dbReference type="InterPro" id="IPR009080">
    <property type="entry name" value="tRNAsynth_Ia_anticodon-bd"/>
</dbReference>
<dbReference type="InterPro" id="IPR009008">
    <property type="entry name" value="Val/Leu/Ile-tRNA-synth_edit"/>
</dbReference>
<dbReference type="NCBIfam" id="TIGR00396">
    <property type="entry name" value="leuS_bact"/>
    <property type="match status" value="1"/>
</dbReference>
<dbReference type="PANTHER" id="PTHR43740:SF2">
    <property type="entry name" value="LEUCINE--TRNA LIGASE, MITOCHONDRIAL"/>
    <property type="match status" value="1"/>
</dbReference>
<dbReference type="PANTHER" id="PTHR43740">
    <property type="entry name" value="LEUCYL-TRNA SYNTHETASE"/>
    <property type="match status" value="1"/>
</dbReference>
<dbReference type="Pfam" id="PF08264">
    <property type="entry name" value="Anticodon_1"/>
    <property type="match status" value="1"/>
</dbReference>
<dbReference type="Pfam" id="PF00133">
    <property type="entry name" value="tRNA-synt_1"/>
    <property type="match status" value="1"/>
</dbReference>
<dbReference type="Pfam" id="PF13603">
    <property type="entry name" value="tRNA-synt_1_2"/>
    <property type="match status" value="1"/>
</dbReference>
<dbReference type="Pfam" id="PF09334">
    <property type="entry name" value="tRNA-synt_1g"/>
    <property type="match status" value="2"/>
</dbReference>
<dbReference type="PRINTS" id="PR00985">
    <property type="entry name" value="TRNASYNTHLEU"/>
</dbReference>
<dbReference type="SUPFAM" id="SSF47323">
    <property type="entry name" value="Anticodon-binding domain of a subclass of class I aminoacyl-tRNA synthetases"/>
    <property type="match status" value="1"/>
</dbReference>
<dbReference type="SUPFAM" id="SSF52374">
    <property type="entry name" value="Nucleotidylyl transferase"/>
    <property type="match status" value="1"/>
</dbReference>
<dbReference type="SUPFAM" id="SSF50677">
    <property type="entry name" value="ValRS/IleRS/LeuRS editing domain"/>
    <property type="match status" value="1"/>
</dbReference>
<dbReference type="PROSITE" id="PS00178">
    <property type="entry name" value="AA_TRNA_LIGASE_I"/>
    <property type="match status" value="1"/>
</dbReference>
<evidence type="ECO:0000255" key="1">
    <source>
        <dbReference type="HAMAP-Rule" id="MF_00049"/>
    </source>
</evidence>